<sequence>MFRQSRWDEPLIFELGNKGRKGFIVPEPEEEVKRKVGGIRIPEKILRKKPPNLPEVSEVEVIRHYTRLTEMSYGVDNGPVPLGSCTMKYNPRIAWEISNDYRINMLHPLQDERTIQGLLEILYELQKWLANITGMDYCSLHPAAGAHGEFSGILIIRKYHELKKQLDRKSEIIIPDSAHGTNPASASMGGFKVVEVPSGEDGNIDMEALKSVVGESTAGLMITNPSTLGLFEENVVEISKIIHGVDGLLYYDGANLNGIMGYTRPGDMGFDIAHINIHKTFGAPHGGGGPGAGPVCVKDKLIDEERNIWLRDLLPGYRVVYDEKTGLYKLVNNEKYSIGLLKAFFGNIVPLIWGYTYILMLGSKGLRTVTEQAVLNTNYFISLVKDIRGYDIPYGKDRYRKHEVVLSAKPLYDDTGVSAEDVAKGLLDAGFYAPTIYFPLIVHEALMTEFTESETIEYIEKYAERLQEISTIAYSDPEKAKEWPLNTSVRRVDNVRANHPKTLAPTWRIYMEKVCRKYSEC</sequence>
<gene>
    <name evidence="1" type="primary">gcvPB</name>
    <name type="ordered locus">Smar_1114</name>
</gene>
<evidence type="ECO:0000255" key="1">
    <source>
        <dbReference type="HAMAP-Rule" id="MF_00713"/>
    </source>
</evidence>
<reference key="1">
    <citation type="journal article" date="2009" name="BMC Genomics">
        <title>The complete genome sequence of Staphylothermus marinus reveals differences in sulfur metabolism among heterotrophic Crenarchaeota.</title>
        <authorList>
            <person name="Anderson I.J."/>
            <person name="Dharmarajan L."/>
            <person name="Rodriguez J."/>
            <person name="Hooper S."/>
            <person name="Porat I."/>
            <person name="Ulrich L.E."/>
            <person name="Elkins J.G."/>
            <person name="Mavromatis K."/>
            <person name="Sun H."/>
            <person name="Land M."/>
            <person name="Lapidus A."/>
            <person name="Lucas S."/>
            <person name="Barry K."/>
            <person name="Huber H."/>
            <person name="Zhulin I.B."/>
            <person name="Whitman W.B."/>
            <person name="Mukhopadhyay B."/>
            <person name="Woese C."/>
            <person name="Bristow J."/>
            <person name="Kyrpides N."/>
        </authorList>
    </citation>
    <scope>NUCLEOTIDE SEQUENCE [LARGE SCALE GENOMIC DNA]</scope>
    <source>
        <strain>ATCC 43588 / DSM 3639 / JCM 9404 / F1</strain>
    </source>
</reference>
<reference key="2">
    <citation type="journal article" date="2009" name="Stand. Genomic Sci.">
        <title>Complete genome sequence of Staphylothermus marinus Stetter and Fiala 1986 type strain F1.</title>
        <authorList>
            <person name="Anderson I.J."/>
            <person name="Sun H."/>
            <person name="Lapidus A."/>
            <person name="Copeland A."/>
            <person name="Glavina Del Rio T."/>
            <person name="Tice H."/>
            <person name="Dalin E."/>
            <person name="Lucas S."/>
            <person name="Barry K."/>
            <person name="Land M."/>
            <person name="Richardson P."/>
            <person name="Huber H."/>
            <person name="Kyrpides N.C."/>
        </authorList>
    </citation>
    <scope>NUCLEOTIDE SEQUENCE [LARGE SCALE GENOMIC DNA]</scope>
    <source>
        <strain>ATCC 43588 / DSM 3639 / JCM 9404 / F1</strain>
    </source>
</reference>
<dbReference type="EC" id="1.4.4.2" evidence="1"/>
<dbReference type="EMBL" id="CP000575">
    <property type="protein sequence ID" value="ABN70210.1"/>
    <property type="molecule type" value="Genomic_DNA"/>
</dbReference>
<dbReference type="RefSeq" id="WP_011839401.1">
    <property type="nucleotide sequence ID" value="NC_009033.1"/>
</dbReference>
<dbReference type="SMR" id="A3DNK0"/>
<dbReference type="STRING" id="399550.Smar_1114"/>
<dbReference type="GeneID" id="4907548"/>
<dbReference type="KEGG" id="smr:Smar_1114"/>
<dbReference type="eggNOG" id="arCOG00076">
    <property type="taxonomic scope" value="Archaea"/>
</dbReference>
<dbReference type="HOGENOM" id="CLU_004620_5_0_2"/>
<dbReference type="OrthoDB" id="371967at2157"/>
<dbReference type="Proteomes" id="UP000000254">
    <property type="component" value="Chromosome"/>
</dbReference>
<dbReference type="GO" id="GO:0005829">
    <property type="term" value="C:cytosol"/>
    <property type="evidence" value="ECO:0007669"/>
    <property type="project" value="TreeGrafter"/>
</dbReference>
<dbReference type="GO" id="GO:0005960">
    <property type="term" value="C:glycine cleavage complex"/>
    <property type="evidence" value="ECO:0007669"/>
    <property type="project" value="TreeGrafter"/>
</dbReference>
<dbReference type="GO" id="GO:0016594">
    <property type="term" value="F:glycine binding"/>
    <property type="evidence" value="ECO:0007669"/>
    <property type="project" value="TreeGrafter"/>
</dbReference>
<dbReference type="GO" id="GO:0004375">
    <property type="term" value="F:glycine dehydrogenase (decarboxylating) activity"/>
    <property type="evidence" value="ECO:0007669"/>
    <property type="project" value="UniProtKB-EC"/>
</dbReference>
<dbReference type="GO" id="GO:0030170">
    <property type="term" value="F:pyridoxal phosphate binding"/>
    <property type="evidence" value="ECO:0007669"/>
    <property type="project" value="TreeGrafter"/>
</dbReference>
<dbReference type="GO" id="GO:0019464">
    <property type="term" value="P:glycine decarboxylation via glycine cleavage system"/>
    <property type="evidence" value="ECO:0007669"/>
    <property type="project" value="UniProtKB-UniRule"/>
</dbReference>
<dbReference type="FunFam" id="3.40.640.10:FF:000224">
    <property type="entry name" value="Probable glycine dehydrogenase (decarboxylating) subunit 2"/>
    <property type="match status" value="1"/>
</dbReference>
<dbReference type="Gene3D" id="6.20.440.10">
    <property type="match status" value="1"/>
</dbReference>
<dbReference type="Gene3D" id="3.90.1150.10">
    <property type="entry name" value="Aspartate Aminotransferase, domain 1"/>
    <property type="match status" value="1"/>
</dbReference>
<dbReference type="Gene3D" id="3.40.640.10">
    <property type="entry name" value="Type I PLP-dependent aspartate aminotransferase-like (Major domain)"/>
    <property type="match status" value="1"/>
</dbReference>
<dbReference type="HAMAP" id="MF_00713">
    <property type="entry name" value="GcvPB"/>
    <property type="match status" value="1"/>
</dbReference>
<dbReference type="InterPro" id="IPR023012">
    <property type="entry name" value="GcvPB"/>
</dbReference>
<dbReference type="InterPro" id="IPR049316">
    <property type="entry name" value="GDC-P_C"/>
</dbReference>
<dbReference type="InterPro" id="IPR049315">
    <property type="entry name" value="GDC-P_N"/>
</dbReference>
<dbReference type="InterPro" id="IPR020581">
    <property type="entry name" value="GDC_P"/>
</dbReference>
<dbReference type="InterPro" id="IPR015424">
    <property type="entry name" value="PyrdxlP-dep_Trfase"/>
</dbReference>
<dbReference type="InterPro" id="IPR015421">
    <property type="entry name" value="PyrdxlP-dep_Trfase_major"/>
</dbReference>
<dbReference type="InterPro" id="IPR015422">
    <property type="entry name" value="PyrdxlP-dep_Trfase_small"/>
</dbReference>
<dbReference type="NCBIfam" id="NF003346">
    <property type="entry name" value="PRK04366.1"/>
    <property type="match status" value="1"/>
</dbReference>
<dbReference type="PANTHER" id="PTHR11773:SF1">
    <property type="entry name" value="GLYCINE DEHYDROGENASE (DECARBOXYLATING), MITOCHONDRIAL"/>
    <property type="match status" value="1"/>
</dbReference>
<dbReference type="PANTHER" id="PTHR11773">
    <property type="entry name" value="GLYCINE DEHYDROGENASE, DECARBOXYLATING"/>
    <property type="match status" value="1"/>
</dbReference>
<dbReference type="Pfam" id="PF21478">
    <property type="entry name" value="GcvP2_C"/>
    <property type="match status" value="1"/>
</dbReference>
<dbReference type="Pfam" id="PF02347">
    <property type="entry name" value="GDC-P"/>
    <property type="match status" value="1"/>
</dbReference>
<dbReference type="SUPFAM" id="SSF53383">
    <property type="entry name" value="PLP-dependent transferases"/>
    <property type="match status" value="1"/>
</dbReference>
<proteinExistence type="inferred from homology"/>
<accession>A3DNK0</accession>
<organism>
    <name type="scientific">Staphylothermus marinus (strain ATCC 43588 / DSM 3639 / JCM 9404 / F1)</name>
    <dbReference type="NCBI Taxonomy" id="399550"/>
    <lineage>
        <taxon>Archaea</taxon>
        <taxon>Thermoproteota</taxon>
        <taxon>Thermoprotei</taxon>
        <taxon>Desulfurococcales</taxon>
        <taxon>Desulfurococcaceae</taxon>
        <taxon>Staphylothermus</taxon>
    </lineage>
</organism>
<comment type="function">
    <text evidence="1">The glycine cleavage system catalyzes the degradation of glycine. The P protein binds the alpha-amino group of glycine through its pyridoxal phosphate cofactor; CO(2) is released and the remaining methylamine moiety is then transferred to the lipoamide cofactor of the H protein.</text>
</comment>
<comment type="catalytic activity">
    <reaction evidence="1">
        <text>N(6)-[(R)-lipoyl]-L-lysyl-[glycine-cleavage complex H protein] + glycine + H(+) = N(6)-[(R)-S(8)-aminomethyldihydrolipoyl]-L-lysyl-[glycine-cleavage complex H protein] + CO2</text>
        <dbReference type="Rhea" id="RHEA:24304"/>
        <dbReference type="Rhea" id="RHEA-COMP:10494"/>
        <dbReference type="Rhea" id="RHEA-COMP:10495"/>
        <dbReference type="ChEBI" id="CHEBI:15378"/>
        <dbReference type="ChEBI" id="CHEBI:16526"/>
        <dbReference type="ChEBI" id="CHEBI:57305"/>
        <dbReference type="ChEBI" id="CHEBI:83099"/>
        <dbReference type="ChEBI" id="CHEBI:83143"/>
        <dbReference type="EC" id="1.4.4.2"/>
    </reaction>
</comment>
<comment type="cofactor">
    <cofactor evidence="1">
        <name>pyridoxal 5'-phosphate</name>
        <dbReference type="ChEBI" id="CHEBI:597326"/>
    </cofactor>
</comment>
<comment type="subunit">
    <text evidence="1">The glycine cleavage system is composed of four proteins: P, T, L and H. In this organism, the P 'protein' is a heterodimer of two subunits.</text>
</comment>
<comment type="similarity">
    <text evidence="1">Belongs to the GcvP family. C-terminal subunit subfamily.</text>
</comment>
<name>GCSPB_STAMF</name>
<protein>
    <recommendedName>
        <fullName evidence="1">Probable glycine dehydrogenase (decarboxylating) subunit 2</fullName>
        <ecNumber evidence="1">1.4.4.2</ecNumber>
    </recommendedName>
    <alternativeName>
        <fullName evidence="1">Glycine cleavage system P-protein subunit 2</fullName>
    </alternativeName>
    <alternativeName>
        <fullName evidence="1">Glycine decarboxylase subunit 2</fullName>
    </alternativeName>
    <alternativeName>
        <fullName evidence="1">Glycine dehydrogenase (aminomethyl-transferring) subunit 2</fullName>
    </alternativeName>
</protein>
<keyword id="KW-0560">Oxidoreductase</keyword>
<keyword id="KW-0663">Pyridoxal phosphate</keyword>
<keyword id="KW-1185">Reference proteome</keyword>
<feature type="chain" id="PRO_1000045706" description="Probable glycine dehydrogenase (decarboxylating) subunit 2">
    <location>
        <begin position="1"/>
        <end position="521"/>
    </location>
</feature>
<feature type="modified residue" description="N6-(pyridoxal phosphate)lysine" evidence="1">
    <location>
        <position position="279"/>
    </location>
</feature>